<evidence type="ECO:0000305" key="1"/>
<reference key="1">
    <citation type="journal article" date="1997" name="Nat. Genet.">
        <title>The mitochondrial genome of Arabidopsis thaliana contains 57 genes in 366,924 nucleotides.</title>
        <authorList>
            <person name="Unseld M."/>
            <person name="Marienfeld J.R."/>
            <person name="Brandt P."/>
            <person name="Brennicke A."/>
        </authorList>
    </citation>
    <scope>NUCLEOTIDE SEQUENCE [LARGE SCALE GENOMIC DNA]</scope>
    <source>
        <strain>cv. C24</strain>
    </source>
</reference>
<reference key="2">
    <citation type="journal article" date="2018" name="Plant Cell">
        <title>Correction of persistent errors in Arabidopsis reference mitochondrial genomes.</title>
        <authorList>
            <person name="Sloan D.B."/>
            <person name="Wu Z."/>
            <person name="Sharbrough J."/>
        </authorList>
    </citation>
    <scope>NUCLEOTIDE SEQUENCE [LARGE SCALE GENOMIC DNA]</scope>
    <source>
        <strain>cv. Columbia</strain>
    </source>
</reference>
<organism>
    <name type="scientific">Arabidopsis thaliana</name>
    <name type="common">Mouse-ear cress</name>
    <dbReference type="NCBI Taxonomy" id="3702"/>
    <lineage>
        <taxon>Eukaryota</taxon>
        <taxon>Viridiplantae</taxon>
        <taxon>Streptophyta</taxon>
        <taxon>Embryophyta</taxon>
        <taxon>Tracheophyta</taxon>
        <taxon>Spermatophyta</taxon>
        <taxon>Magnoliopsida</taxon>
        <taxon>eudicotyledons</taxon>
        <taxon>Gunneridae</taxon>
        <taxon>Pentapetalae</taxon>
        <taxon>rosids</taxon>
        <taxon>malvids</taxon>
        <taxon>Brassicales</taxon>
        <taxon>Brassicaceae</taxon>
        <taxon>Camelineae</taxon>
        <taxon>Arabidopsis</taxon>
    </lineage>
</organism>
<keyword id="KW-0496">Mitochondrion</keyword>
<keyword id="KW-1185">Reference proteome</keyword>
<dbReference type="EMBL" id="Y08501">
    <property type="protein sequence ID" value="CAA69747.1"/>
    <property type="molecule type" value="Genomic_DNA"/>
</dbReference>
<dbReference type="EMBL" id="BK010421">
    <property type="status" value="NOT_ANNOTATED_CDS"/>
    <property type="molecule type" value="Genomic_DNA"/>
</dbReference>
<dbReference type="RefSeq" id="NP_085523.1">
    <property type="nucleotide sequence ID" value="NC_001284.2"/>
</dbReference>
<dbReference type="SMR" id="P93317"/>
<dbReference type="iPTMnet" id="P93317"/>
<dbReference type="PaxDb" id="3702-ATMG00630.1"/>
<dbReference type="EnsemblPlants" id="ATMG00630.1">
    <property type="protein sequence ID" value="ATMG00630.1"/>
    <property type="gene ID" value="ATMG00630"/>
</dbReference>
<dbReference type="Gramene" id="ATMG00630.1">
    <property type="protein sequence ID" value="ATMG00630.1"/>
    <property type="gene ID" value="ATMG00630"/>
</dbReference>
<dbReference type="Araport" id="ATMG00630"/>
<dbReference type="TAIR" id="ATMG00630">
    <property type="gene designation" value="ORF110B"/>
</dbReference>
<dbReference type="HOGENOM" id="CLU_2174471_0_0_1"/>
<dbReference type="InParanoid" id="P93317"/>
<dbReference type="PRO" id="PR:P93317"/>
<dbReference type="Proteomes" id="UP000006548">
    <property type="component" value="Mitochondrion MT"/>
</dbReference>
<dbReference type="GO" id="GO:0005739">
    <property type="term" value="C:mitochondrion"/>
    <property type="evidence" value="ECO:0007669"/>
    <property type="project" value="UniProtKB-SubCell"/>
</dbReference>
<name>M630_ARATH</name>
<protein>
    <recommendedName>
        <fullName>Uncharacterized mitochondrial protein AtMg00630</fullName>
    </recommendedName>
    <alternativeName>
        <fullName>ORF110b</fullName>
    </alternativeName>
</protein>
<feature type="chain" id="PRO_0000196781" description="Uncharacterized mitochondrial protein AtMg00630">
    <location>
        <begin position="1"/>
        <end position="110"/>
    </location>
</feature>
<gene>
    <name type="ordered locus">AtMg00630</name>
</gene>
<geneLocation type="mitochondrion"/>
<comment type="subcellular location">
    <subcellularLocation>
        <location evidence="1">Mitochondrion</location>
    </subcellularLocation>
</comment>
<accession>P93317</accession>
<sequence>MPSPILPMLPISHLIGTEVRNLISVRTPNITMDQLKNGCCSILTQLETLLRSQSPSEMTIFQTLCDRCCGAEVANEATVECGKTMETTNLTSGGRYWPFHNGTNLSRISL</sequence>
<proteinExistence type="predicted"/>